<evidence type="ECO:0000255" key="1">
    <source>
        <dbReference type="HAMAP-Rule" id="MF_00445"/>
    </source>
</evidence>
<keyword id="KW-0150">Chloroplast</keyword>
<keyword id="KW-0472">Membrane</keyword>
<keyword id="KW-0520">NAD</keyword>
<keyword id="KW-0521">NADP</keyword>
<keyword id="KW-0934">Plastid</keyword>
<keyword id="KW-0618">Plastoquinone</keyword>
<keyword id="KW-0874">Quinone</keyword>
<keyword id="KW-0793">Thylakoid</keyword>
<keyword id="KW-1278">Translocase</keyword>
<keyword id="KW-0812">Transmembrane</keyword>
<keyword id="KW-1133">Transmembrane helix</keyword>
<keyword id="KW-0813">Transport</keyword>
<organism>
    <name type="scientific">Helianthus annuus</name>
    <name type="common">Common sunflower</name>
    <dbReference type="NCBI Taxonomy" id="4232"/>
    <lineage>
        <taxon>Eukaryota</taxon>
        <taxon>Viridiplantae</taxon>
        <taxon>Streptophyta</taxon>
        <taxon>Embryophyta</taxon>
        <taxon>Tracheophyta</taxon>
        <taxon>Spermatophyta</taxon>
        <taxon>Magnoliopsida</taxon>
        <taxon>eudicotyledons</taxon>
        <taxon>Gunneridae</taxon>
        <taxon>Pentapetalae</taxon>
        <taxon>asterids</taxon>
        <taxon>campanulids</taxon>
        <taxon>Asterales</taxon>
        <taxon>Asteraceae</taxon>
        <taxon>Asteroideae</taxon>
        <taxon>Heliantheae alliance</taxon>
        <taxon>Heliantheae</taxon>
        <taxon>Helianthus</taxon>
    </lineage>
</organism>
<comment type="function">
    <text evidence="1">NDH shuttles electrons from NAD(P)H:plastoquinone, via FMN and iron-sulfur (Fe-S) centers, to quinones in the photosynthetic chain and possibly in a chloroplast respiratory chain. The immediate electron acceptor for the enzyme in this species is believed to be plastoquinone. Couples the redox reaction to proton translocation, and thus conserves the redox energy in a proton gradient.</text>
</comment>
<comment type="catalytic activity">
    <reaction evidence="1">
        <text>a plastoquinone + NADH + (n+1) H(+)(in) = a plastoquinol + NAD(+) + n H(+)(out)</text>
        <dbReference type="Rhea" id="RHEA:42608"/>
        <dbReference type="Rhea" id="RHEA-COMP:9561"/>
        <dbReference type="Rhea" id="RHEA-COMP:9562"/>
        <dbReference type="ChEBI" id="CHEBI:15378"/>
        <dbReference type="ChEBI" id="CHEBI:17757"/>
        <dbReference type="ChEBI" id="CHEBI:57540"/>
        <dbReference type="ChEBI" id="CHEBI:57945"/>
        <dbReference type="ChEBI" id="CHEBI:62192"/>
    </reaction>
</comment>
<comment type="catalytic activity">
    <reaction evidence="1">
        <text>a plastoquinone + NADPH + (n+1) H(+)(in) = a plastoquinol + NADP(+) + n H(+)(out)</text>
        <dbReference type="Rhea" id="RHEA:42612"/>
        <dbReference type="Rhea" id="RHEA-COMP:9561"/>
        <dbReference type="Rhea" id="RHEA-COMP:9562"/>
        <dbReference type="ChEBI" id="CHEBI:15378"/>
        <dbReference type="ChEBI" id="CHEBI:17757"/>
        <dbReference type="ChEBI" id="CHEBI:57783"/>
        <dbReference type="ChEBI" id="CHEBI:58349"/>
        <dbReference type="ChEBI" id="CHEBI:62192"/>
    </reaction>
</comment>
<comment type="subunit">
    <text evidence="1">NDH is composed of at least 16 different subunits, 5 of which are encoded in the nucleus.</text>
</comment>
<comment type="subcellular location">
    <subcellularLocation>
        <location evidence="1">Plastid</location>
        <location evidence="1">Chloroplast thylakoid membrane</location>
        <topology evidence="1">Multi-pass membrane protein</topology>
    </subcellularLocation>
</comment>
<comment type="similarity">
    <text evidence="1">Belongs to the complex I subunit 2 family.</text>
</comment>
<feature type="chain" id="PRO_0000275598" description="NAD(P)H-quinone oxidoreductase subunit 2 A, chloroplastic">
    <location>
        <begin position="1"/>
        <end position="510"/>
    </location>
</feature>
<feature type="transmembrane region" description="Helical" evidence="1">
    <location>
        <begin position="24"/>
        <end position="44"/>
    </location>
</feature>
<feature type="transmembrane region" description="Helical" evidence="1">
    <location>
        <begin position="57"/>
        <end position="77"/>
    </location>
</feature>
<feature type="transmembrane region" description="Helical" evidence="1">
    <location>
        <begin position="99"/>
        <end position="119"/>
    </location>
</feature>
<feature type="transmembrane region" description="Helical" evidence="1">
    <location>
        <begin position="124"/>
        <end position="144"/>
    </location>
</feature>
<feature type="transmembrane region" description="Helical" evidence="1">
    <location>
        <begin position="149"/>
        <end position="169"/>
    </location>
</feature>
<feature type="transmembrane region" description="Helical" evidence="1">
    <location>
        <begin position="183"/>
        <end position="203"/>
    </location>
</feature>
<feature type="transmembrane region" description="Helical" evidence="1">
    <location>
        <begin position="227"/>
        <end position="247"/>
    </location>
</feature>
<feature type="transmembrane region" description="Helical" evidence="1">
    <location>
        <begin position="295"/>
        <end position="315"/>
    </location>
</feature>
<feature type="transmembrane region" description="Helical" evidence="1">
    <location>
        <begin position="323"/>
        <end position="343"/>
    </location>
</feature>
<feature type="transmembrane region" description="Helical" evidence="1">
    <location>
        <begin position="354"/>
        <end position="374"/>
    </location>
</feature>
<feature type="transmembrane region" description="Helical" evidence="1">
    <location>
        <begin position="395"/>
        <end position="415"/>
    </location>
</feature>
<feature type="transmembrane region" description="Helical" evidence="1">
    <location>
        <begin position="418"/>
        <end position="438"/>
    </location>
</feature>
<feature type="transmembrane region" description="Helical" evidence="1">
    <location>
        <begin position="484"/>
        <end position="504"/>
    </location>
</feature>
<geneLocation type="chloroplast"/>
<name>NU2C1_HELAN</name>
<reference key="1">
    <citation type="submission" date="2006-01" db="EMBL/GenBank/DDBJ databases">
        <title>A comparison of the first two published chloroplast genomes in Asteraceae: Lactuca and Helianthus.</title>
        <authorList>
            <person name="Timme R.E."/>
            <person name="Kuehl J.V."/>
            <person name="Boore J.L."/>
            <person name="Jansen R.K."/>
        </authorList>
    </citation>
    <scope>NUCLEOTIDE SEQUENCE [LARGE SCALE GENOMIC DNA]</scope>
    <source>
        <strain>cv. HA383</strain>
    </source>
</reference>
<accession>P0CC70</accession>
<accession>Q1KXP7</accession>
<dbReference type="EC" id="7.1.1.-" evidence="1"/>
<dbReference type="EMBL" id="DQ383815">
    <property type="protein sequence ID" value="ABD47190.1"/>
    <property type="molecule type" value="Genomic_DNA"/>
</dbReference>
<dbReference type="SMR" id="P0CC70"/>
<dbReference type="KEGG" id="han:4055600"/>
<dbReference type="KEGG" id="han:4055649"/>
<dbReference type="OrthoDB" id="1876953at2759"/>
<dbReference type="GO" id="GO:0009535">
    <property type="term" value="C:chloroplast thylakoid membrane"/>
    <property type="evidence" value="ECO:0007669"/>
    <property type="project" value="UniProtKB-SubCell"/>
</dbReference>
<dbReference type="GO" id="GO:0008137">
    <property type="term" value="F:NADH dehydrogenase (ubiquinone) activity"/>
    <property type="evidence" value="ECO:0007669"/>
    <property type="project" value="InterPro"/>
</dbReference>
<dbReference type="GO" id="GO:0048038">
    <property type="term" value="F:quinone binding"/>
    <property type="evidence" value="ECO:0007669"/>
    <property type="project" value="UniProtKB-KW"/>
</dbReference>
<dbReference type="GO" id="GO:0042773">
    <property type="term" value="P:ATP synthesis coupled electron transport"/>
    <property type="evidence" value="ECO:0007669"/>
    <property type="project" value="InterPro"/>
</dbReference>
<dbReference type="GO" id="GO:0019684">
    <property type="term" value="P:photosynthesis, light reaction"/>
    <property type="evidence" value="ECO:0007669"/>
    <property type="project" value="UniProtKB-UniRule"/>
</dbReference>
<dbReference type="HAMAP" id="MF_00445">
    <property type="entry name" value="NDH1_NuoN_1"/>
    <property type="match status" value="1"/>
</dbReference>
<dbReference type="InterPro" id="IPR010096">
    <property type="entry name" value="NADH-Q_OxRdtase_suN/2"/>
</dbReference>
<dbReference type="InterPro" id="IPR001750">
    <property type="entry name" value="ND/Mrp_TM"/>
</dbReference>
<dbReference type="InterPro" id="IPR045693">
    <property type="entry name" value="Ndh2_N"/>
</dbReference>
<dbReference type="NCBIfam" id="TIGR01770">
    <property type="entry name" value="NDH_I_N"/>
    <property type="match status" value="1"/>
</dbReference>
<dbReference type="NCBIfam" id="NF002701">
    <property type="entry name" value="PRK02504.1"/>
    <property type="match status" value="1"/>
</dbReference>
<dbReference type="PANTHER" id="PTHR22773">
    <property type="entry name" value="NADH DEHYDROGENASE"/>
    <property type="match status" value="1"/>
</dbReference>
<dbReference type="Pfam" id="PF19530">
    <property type="entry name" value="Ndh2_N"/>
    <property type="match status" value="1"/>
</dbReference>
<dbReference type="Pfam" id="PF00361">
    <property type="entry name" value="Proton_antipo_M"/>
    <property type="match status" value="1"/>
</dbReference>
<dbReference type="PRINTS" id="PR01434">
    <property type="entry name" value="NADHDHGNASE5"/>
</dbReference>
<gene>
    <name evidence="1" type="primary">ndhB1</name>
</gene>
<proteinExistence type="inferred from homology"/>
<protein>
    <recommendedName>
        <fullName evidence="1">NAD(P)H-quinone oxidoreductase subunit 2 A, chloroplastic</fullName>
        <ecNumber evidence="1">7.1.1.-</ecNumber>
    </recommendedName>
    <alternativeName>
        <fullName evidence="1">NAD(P)H dehydrogenase, subunit 2 A</fullName>
    </alternativeName>
    <alternativeName>
        <fullName evidence="1">NADH-plastoquinone oxidoreductase subunit 2 A</fullName>
    </alternativeName>
</protein>
<sequence>MIWHVQNENFILDSTRIFMKAFHLLLFDGSLIFPECILIFGLILLLMIDSTSDQKDIPWLYFISSTSLVMSITALLFRWREEPMISFSGNFQTNNFNEIFQFLILLCSTLCIPLSVEYIECTEMAITEFLLFILTATIGGMFLCGANDLITIFVAPECFSLCSYLLSGYTKKDVRSNEATMKYLLMGGASSSILVHGFSWLYGSSGGEIELQEIVNGLINTQMYNSPGISIALIFITVGIGFKLSPAPSHQWTPDVYEGSPTPVVAFLSVTSKVAASASATRIFDIPFYFSSNEWHLLLEILAILSMILGNLIAITQTSMKRMLAYSSIGQIGYVIIGIIVGDSNDGYASMITYMLFYISMNLGTFACIVLFGLRTGTENIRDYAGLYTKDPFLALSLALCLLSLGGLPPLAGFFGKLYLFWCGWQAGLYLLVLIGLLTSVVSIYYYLKIIKLLMTGRNQEITPHVRNYRRSPLRSNNSIELSMIVCVIASTIPGISMNPIIAIAQDTLF</sequence>